<comment type="subunit">
    <text>Part of the 50S ribosomal subunit.</text>
</comment>
<comment type="miscellaneous">
    <text>The open reading frame (ORF) for this protein is entirely within the ORF for the RNase P protein (RnaP). The two start codons are separated by four nucleotides.</text>
</comment>
<comment type="similarity">
    <text evidence="1">Belongs to the bacterial ribosomal protein bL34 family.</text>
</comment>
<dbReference type="EMBL" id="AY256341">
    <property type="protein sequence ID" value="AAO88974.1"/>
    <property type="molecule type" value="Genomic_DNA"/>
</dbReference>
<dbReference type="RefSeq" id="WP_015716485.1">
    <property type="nucleotide sequence ID" value="NZ_PEMW01000044.1"/>
</dbReference>
<dbReference type="SMR" id="Q7X5K9"/>
<dbReference type="GeneID" id="93867893"/>
<dbReference type="GO" id="GO:1990904">
    <property type="term" value="C:ribonucleoprotein complex"/>
    <property type="evidence" value="ECO:0007669"/>
    <property type="project" value="UniProtKB-KW"/>
</dbReference>
<dbReference type="GO" id="GO:0005840">
    <property type="term" value="C:ribosome"/>
    <property type="evidence" value="ECO:0007669"/>
    <property type="project" value="UniProtKB-KW"/>
</dbReference>
<dbReference type="GO" id="GO:0003735">
    <property type="term" value="F:structural constituent of ribosome"/>
    <property type="evidence" value="ECO:0007669"/>
    <property type="project" value="InterPro"/>
</dbReference>
<dbReference type="GO" id="GO:0006412">
    <property type="term" value="P:translation"/>
    <property type="evidence" value="ECO:0007669"/>
    <property type="project" value="UniProtKB-UniRule"/>
</dbReference>
<dbReference type="FunFam" id="1.10.287.3980:FF:000001">
    <property type="entry name" value="Mitochondrial ribosomal protein L34"/>
    <property type="match status" value="1"/>
</dbReference>
<dbReference type="Gene3D" id="1.10.287.3980">
    <property type="match status" value="1"/>
</dbReference>
<dbReference type="HAMAP" id="MF_00391">
    <property type="entry name" value="Ribosomal_bL34"/>
    <property type="match status" value="1"/>
</dbReference>
<dbReference type="InterPro" id="IPR000271">
    <property type="entry name" value="Ribosomal_bL34"/>
</dbReference>
<dbReference type="InterPro" id="IPR020939">
    <property type="entry name" value="Ribosomal_bL34_CS"/>
</dbReference>
<dbReference type="NCBIfam" id="TIGR01030">
    <property type="entry name" value="rpmH_bact"/>
    <property type="match status" value="1"/>
</dbReference>
<dbReference type="PANTHER" id="PTHR14503:SF4">
    <property type="entry name" value="LARGE RIBOSOMAL SUBUNIT PROTEIN BL34M"/>
    <property type="match status" value="1"/>
</dbReference>
<dbReference type="PANTHER" id="PTHR14503">
    <property type="entry name" value="MITOCHONDRIAL RIBOSOMAL PROTEIN 34 FAMILY MEMBER"/>
    <property type="match status" value="1"/>
</dbReference>
<dbReference type="Pfam" id="PF00468">
    <property type="entry name" value="Ribosomal_L34"/>
    <property type="match status" value="1"/>
</dbReference>
<dbReference type="PROSITE" id="PS00784">
    <property type="entry name" value="RIBOSOMAL_L34"/>
    <property type="match status" value="1"/>
</dbReference>
<organism>
    <name type="scientific">Thermus scotoductus</name>
    <dbReference type="NCBI Taxonomy" id="37636"/>
    <lineage>
        <taxon>Bacteria</taxon>
        <taxon>Thermotogati</taxon>
        <taxon>Deinococcota</taxon>
        <taxon>Deinococci</taxon>
        <taxon>Thermales</taxon>
        <taxon>Thermaceae</taxon>
        <taxon>Thermus</taxon>
    </lineage>
</organism>
<accession>Q7X5K9</accession>
<reference key="1">
    <citation type="journal article" date="2003" name="Proc. Natl. Acad. Sci. U.S.A.">
        <title>An unusual mechanism of bacterial gene expression revealed for the RNase P protein of Thermus strains.</title>
        <authorList>
            <person name="Feltens R."/>
            <person name="Gossringer M."/>
            <person name="Willkomm D.K."/>
            <person name="Urlaub H."/>
            <person name="Hartmann R.K."/>
        </authorList>
    </citation>
    <scope>NUCLEOTIDE SEQUENCE [GENOMIC DNA]</scope>
    <source>
        <strain>Vi4A</strain>
    </source>
</reference>
<proteinExistence type="inferred from homology"/>
<protein>
    <recommendedName>
        <fullName evidence="1">Large ribosomal subunit protein bL34</fullName>
    </recommendedName>
    <alternativeName>
        <fullName evidence="3">50S ribosomal protein L34</fullName>
    </alternativeName>
</protein>
<keyword id="KW-0687">Ribonucleoprotein</keyword>
<keyword id="KW-0689">Ribosomal protein</keyword>
<gene>
    <name evidence="1" type="primary">rpmH</name>
</gene>
<sequence length="48" mass="5939">MKRTWQPNRRKRAKTHGFRARMRTPGGRKVLKRRRQKGRWRLTPRVNA</sequence>
<evidence type="ECO:0000255" key="1">
    <source>
        <dbReference type="HAMAP-Rule" id="MF_00391"/>
    </source>
</evidence>
<evidence type="ECO:0000256" key="2">
    <source>
        <dbReference type="SAM" id="MobiDB-lite"/>
    </source>
</evidence>
<evidence type="ECO:0000305" key="3"/>
<feature type="chain" id="PRO_0000187492" description="Large ribosomal subunit protein bL34">
    <location>
        <begin position="1"/>
        <end position="48"/>
    </location>
</feature>
<feature type="region of interest" description="Disordered" evidence="2">
    <location>
        <begin position="26"/>
        <end position="48"/>
    </location>
</feature>
<feature type="compositionally biased region" description="Basic residues" evidence="2">
    <location>
        <begin position="29"/>
        <end position="42"/>
    </location>
</feature>
<name>RL34_THESC</name>